<name>DAPF_HALHL</name>
<gene>
    <name evidence="1" type="primary">dapF</name>
    <name type="ordered locus">Hhal_1200</name>
</gene>
<feature type="chain" id="PRO_1000011889" description="Diaminopimelate epimerase">
    <location>
        <begin position="1"/>
        <end position="287"/>
    </location>
</feature>
<feature type="active site" description="Proton donor" evidence="1">
    <location>
        <position position="73"/>
    </location>
</feature>
<feature type="active site" description="Proton acceptor" evidence="1">
    <location>
        <position position="217"/>
    </location>
</feature>
<feature type="binding site" evidence="1">
    <location>
        <position position="11"/>
    </location>
    <ligand>
        <name>substrate</name>
    </ligand>
</feature>
<feature type="binding site" evidence="1">
    <location>
        <position position="44"/>
    </location>
    <ligand>
        <name>substrate</name>
    </ligand>
</feature>
<feature type="binding site" evidence="1">
    <location>
        <position position="64"/>
    </location>
    <ligand>
        <name>substrate</name>
    </ligand>
</feature>
<feature type="binding site" evidence="1">
    <location>
        <begin position="74"/>
        <end position="75"/>
    </location>
    <ligand>
        <name>substrate</name>
    </ligand>
</feature>
<feature type="binding site" evidence="1">
    <location>
        <position position="157"/>
    </location>
    <ligand>
        <name>substrate</name>
    </ligand>
</feature>
<feature type="binding site" evidence="1">
    <location>
        <position position="190"/>
    </location>
    <ligand>
        <name>substrate</name>
    </ligand>
</feature>
<feature type="binding site" evidence="1">
    <location>
        <begin position="208"/>
        <end position="209"/>
    </location>
    <ligand>
        <name>substrate</name>
    </ligand>
</feature>
<feature type="binding site" evidence="1">
    <location>
        <begin position="218"/>
        <end position="219"/>
    </location>
    <ligand>
        <name>substrate</name>
    </ligand>
</feature>
<feature type="site" description="Could be important to modulate the pK values of the two catalytic cysteine residues" evidence="1">
    <location>
        <position position="159"/>
    </location>
</feature>
<feature type="site" description="Could be important to modulate the pK values of the two catalytic cysteine residues" evidence="1">
    <location>
        <position position="208"/>
    </location>
</feature>
<feature type="site" description="Important for dimerization" evidence="1">
    <location>
        <position position="268"/>
    </location>
</feature>
<evidence type="ECO:0000255" key="1">
    <source>
        <dbReference type="HAMAP-Rule" id="MF_00197"/>
    </source>
</evidence>
<keyword id="KW-0028">Amino-acid biosynthesis</keyword>
<keyword id="KW-0963">Cytoplasm</keyword>
<keyword id="KW-0413">Isomerase</keyword>
<keyword id="KW-0457">Lysine biosynthesis</keyword>
<keyword id="KW-1185">Reference proteome</keyword>
<proteinExistence type="inferred from homology"/>
<organism>
    <name type="scientific">Halorhodospira halophila (strain DSM 244 / SL1)</name>
    <name type="common">Ectothiorhodospira halophila (strain DSM 244 / SL1)</name>
    <dbReference type="NCBI Taxonomy" id="349124"/>
    <lineage>
        <taxon>Bacteria</taxon>
        <taxon>Pseudomonadati</taxon>
        <taxon>Pseudomonadota</taxon>
        <taxon>Gammaproteobacteria</taxon>
        <taxon>Chromatiales</taxon>
        <taxon>Ectothiorhodospiraceae</taxon>
        <taxon>Halorhodospira</taxon>
    </lineage>
</organism>
<dbReference type="EC" id="5.1.1.7" evidence="1"/>
<dbReference type="EMBL" id="CP000544">
    <property type="protein sequence ID" value="ABM61975.1"/>
    <property type="molecule type" value="Genomic_DNA"/>
</dbReference>
<dbReference type="SMR" id="A1WWB3"/>
<dbReference type="STRING" id="349124.Hhal_1200"/>
<dbReference type="KEGG" id="hha:Hhal_1200"/>
<dbReference type="eggNOG" id="COG0253">
    <property type="taxonomic scope" value="Bacteria"/>
</dbReference>
<dbReference type="HOGENOM" id="CLU_053306_1_1_6"/>
<dbReference type="OrthoDB" id="9805408at2"/>
<dbReference type="UniPathway" id="UPA00034">
    <property type="reaction ID" value="UER00025"/>
</dbReference>
<dbReference type="Proteomes" id="UP000000647">
    <property type="component" value="Chromosome"/>
</dbReference>
<dbReference type="GO" id="GO:0005829">
    <property type="term" value="C:cytosol"/>
    <property type="evidence" value="ECO:0007669"/>
    <property type="project" value="TreeGrafter"/>
</dbReference>
<dbReference type="GO" id="GO:0008837">
    <property type="term" value="F:diaminopimelate epimerase activity"/>
    <property type="evidence" value="ECO:0007669"/>
    <property type="project" value="UniProtKB-UniRule"/>
</dbReference>
<dbReference type="GO" id="GO:0009089">
    <property type="term" value="P:lysine biosynthetic process via diaminopimelate"/>
    <property type="evidence" value="ECO:0007669"/>
    <property type="project" value="UniProtKB-UniRule"/>
</dbReference>
<dbReference type="FunFam" id="3.10.310.10:FF:000001">
    <property type="entry name" value="Diaminopimelate epimerase"/>
    <property type="match status" value="1"/>
</dbReference>
<dbReference type="Gene3D" id="3.10.310.10">
    <property type="entry name" value="Diaminopimelate Epimerase, Chain A, domain 1"/>
    <property type="match status" value="2"/>
</dbReference>
<dbReference type="HAMAP" id="MF_00197">
    <property type="entry name" value="DAP_epimerase"/>
    <property type="match status" value="1"/>
</dbReference>
<dbReference type="InterPro" id="IPR018510">
    <property type="entry name" value="DAP_epimerase_AS"/>
</dbReference>
<dbReference type="InterPro" id="IPR001653">
    <property type="entry name" value="DAP_epimerase_DapF"/>
</dbReference>
<dbReference type="NCBIfam" id="TIGR00652">
    <property type="entry name" value="DapF"/>
    <property type="match status" value="1"/>
</dbReference>
<dbReference type="PANTHER" id="PTHR31689:SF0">
    <property type="entry name" value="DIAMINOPIMELATE EPIMERASE"/>
    <property type="match status" value="1"/>
</dbReference>
<dbReference type="PANTHER" id="PTHR31689">
    <property type="entry name" value="DIAMINOPIMELATE EPIMERASE, CHLOROPLASTIC"/>
    <property type="match status" value="1"/>
</dbReference>
<dbReference type="Pfam" id="PF01678">
    <property type="entry name" value="DAP_epimerase"/>
    <property type="match status" value="2"/>
</dbReference>
<dbReference type="SUPFAM" id="SSF54506">
    <property type="entry name" value="Diaminopimelate epimerase-like"/>
    <property type="match status" value="1"/>
</dbReference>
<dbReference type="PROSITE" id="PS01326">
    <property type="entry name" value="DAP_EPIMERASE"/>
    <property type="match status" value="1"/>
</dbReference>
<protein>
    <recommendedName>
        <fullName evidence="1">Diaminopimelate epimerase</fullName>
        <shortName evidence="1">DAP epimerase</shortName>
        <ecNumber evidence="1">5.1.1.7</ecNumber>
    </recommendedName>
    <alternativeName>
        <fullName evidence="1">PLP-independent amino acid racemase</fullName>
    </alternativeName>
</protein>
<comment type="function">
    <text evidence="1">Catalyzes the stereoinversion of LL-2,6-diaminopimelate (L,L-DAP) to meso-diaminopimelate (meso-DAP), a precursor of L-lysine and an essential component of the bacterial peptidoglycan.</text>
</comment>
<comment type="catalytic activity">
    <reaction evidence="1">
        <text>(2S,6S)-2,6-diaminopimelate = meso-2,6-diaminopimelate</text>
        <dbReference type="Rhea" id="RHEA:15393"/>
        <dbReference type="ChEBI" id="CHEBI:57609"/>
        <dbReference type="ChEBI" id="CHEBI:57791"/>
        <dbReference type="EC" id="5.1.1.7"/>
    </reaction>
</comment>
<comment type="pathway">
    <text evidence="1">Amino-acid biosynthesis; L-lysine biosynthesis via DAP pathway; DL-2,6-diaminopimelate from LL-2,6-diaminopimelate: step 1/1.</text>
</comment>
<comment type="subunit">
    <text evidence="1">Homodimer.</text>
</comment>
<comment type="subcellular location">
    <subcellularLocation>
        <location evidence="1">Cytoplasm</location>
    </subcellularLocation>
</comment>
<comment type="similarity">
    <text evidence="1">Belongs to the diaminopimelate epimerase family.</text>
</comment>
<sequence length="287" mass="31277">MRFTKMEALGNDFVVLDGIRQRLHLTPETIRTLADRRRGVGCDQLLIAEPPAHIAADVRYRIFNADGTEVEHCGNGVRCLARFLVDEGLAAPGVLRIETDGRITEAEPRDDGQVSVDMGPPELEPARIPFQAPVRQEAYRLATSRGEQTIGAVSMGNPHAVLRVDDMTGAPVAELGPEIERHPRFPRRVNVGFMEVCTRDRIRLRVFERGVGETPACGTGACAAVVAGRLRDWLDAPVTVELTGGVLVIHWLGPGRSVWMTGPARTVFRGEIELPASAAATPRGPTR</sequence>
<reference key="1">
    <citation type="submission" date="2006-12" db="EMBL/GenBank/DDBJ databases">
        <title>Complete sequence of Halorhodospira halophila SL1.</title>
        <authorList>
            <consortium name="US DOE Joint Genome Institute"/>
            <person name="Copeland A."/>
            <person name="Lucas S."/>
            <person name="Lapidus A."/>
            <person name="Barry K."/>
            <person name="Detter J.C."/>
            <person name="Glavina del Rio T."/>
            <person name="Hammon N."/>
            <person name="Israni S."/>
            <person name="Dalin E."/>
            <person name="Tice H."/>
            <person name="Pitluck S."/>
            <person name="Saunders E."/>
            <person name="Brettin T."/>
            <person name="Bruce D."/>
            <person name="Han C."/>
            <person name="Tapia R."/>
            <person name="Schmutz J."/>
            <person name="Larimer F."/>
            <person name="Land M."/>
            <person name="Hauser L."/>
            <person name="Kyrpides N."/>
            <person name="Mikhailova N."/>
            <person name="Hoff W."/>
            <person name="Richardson P."/>
        </authorList>
    </citation>
    <scope>NUCLEOTIDE SEQUENCE [LARGE SCALE GENOMIC DNA]</scope>
    <source>
        <strain>DSM 244 / SL1</strain>
    </source>
</reference>
<accession>A1WWB3</accession>